<accession>P38427</accession>
<accession>D6W0I5</accession>
<evidence type="ECO:0000256" key="1">
    <source>
        <dbReference type="SAM" id="MobiDB-lite"/>
    </source>
</evidence>
<evidence type="ECO:0000269" key="2">
    <source>
    </source>
</evidence>
<evidence type="ECO:0000269" key="3">
    <source>
    </source>
</evidence>
<evidence type="ECO:0000269" key="4">
    <source>
    </source>
</evidence>
<evidence type="ECO:0000269" key="5">
    <source>
    </source>
</evidence>
<evidence type="ECO:0000305" key="6"/>
<evidence type="ECO:0007744" key="7">
    <source>
    </source>
</evidence>
<evidence type="ECO:0007744" key="8">
    <source>
    </source>
</evidence>
<evidence type="ECO:0007744" key="9">
    <source>
    </source>
</evidence>
<name>TSL1_YEAST</name>
<keyword id="KW-0963">Cytoplasm</keyword>
<keyword id="KW-0903">Direct protein sequencing</keyword>
<keyword id="KW-0597">Phosphoprotein</keyword>
<keyword id="KW-1185">Reference proteome</keyword>
<keyword id="KW-0677">Repeat</keyword>
<dbReference type="EMBL" id="X72788">
    <property type="protein sequence ID" value="CAA51303.1"/>
    <property type="molecule type" value="Genomic_DNA"/>
</dbReference>
<dbReference type="EMBL" id="X80835">
    <property type="protein sequence ID" value="CAA56797.1"/>
    <property type="molecule type" value="Genomic_DNA"/>
</dbReference>
<dbReference type="EMBL" id="BK006946">
    <property type="protein sequence ID" value="DAA09799.1"/>
    <property type="molecule type" value="Genomic_DNA"/>
</dbReference>
<dbReference type="PIR" id="S36868">
    <property type="entry name" value="S36868"/>
</dbReference>
<dbReference type="RefSeq" id="NP_013608.1">
    <property type="nucleotide sequence ID" value="NM_001182460.1"/>
</dbReference>
<dbReference type="SMR" id="P38427"/>
<dbReference type="BioGRID" id="35043">
    <property type="interactions" value="104"/>
</dbReference>
<dbReference type="ComplexPortal" id="CPX-583">
    <property type="entry name" value="Trehalose-6-phosphate synthase/phosphatase complex, tsl1 variant"/>
</dbReference>
<dbReference type="DIP" id="DIP-753N"/>
<dbReference type="FunCoup" id="P38427">
    <property type="interactions" value="402"/>
</dbReference>
<dbReference type="IntAct" id="P38427">
    <property type="interactions" value="31"/>
</dbReference>
<dbReference type="MINT" id="P38427"/>
<dbReference type="STRING" id="4932.YML100W"/>
<dbReference type="CAZy" id="GT20">
    <property type="family name" value="Glycosyltransferase Family 20"/>
</dbReference>
<dbReference type="GlyGen" id="P38427">
    <property type="glycosylation" value="1 site, 1 O-linked glycan (1 site)"/>
</dbReference>
<dbReference type="iPTMnet" id="P38427"/>
<dbReference type="PaxDb" id="4932-YML100W"/>
<dbReference type="PeptideAtlas" id="P38427"/>
<dbReference type="EnsemblFungi" id="YML100W_mRNA">
    <property type="protein sequence ID" value="YML100W"/>
    <property type="gene ID" value="YML100W"/>
</dbReference>
<dbReference type="GeneID" id="854872"/>
<dbReference type="KEGG" id="sce:YML100W"/>
<dbReference type="AGR" id="SGD:S000004566"/>
<dbReference type="SGD" id="S000004566">
    <property type="gene designation" value="TSL1"/>
</dbReference>
<dbReference type="VEuPathDB" id="FungiDB:YML100W"/>
<dbReference type="eggNOG" id="KOG1050">
    <property type="taxonomic scope" value="Eukaryota"/>
</dbReference>
<dbReference type="GeneTree" id="ENSGT00940000167933"/>
<dbReference type="HOGENOM" id="CLU_002351_2_0_1"/>
<dbReference type="InParanoid" id="P38427"/>
<dbReference type="OMA" id="CHEFIVC"/>
<dbReference type="OrthoDB" id="755951at2759"/>
<dbReference type="BioCyc" id="MetaCyc:MONOMER3O-4029"/>
<dbReference type="BioCyc" id="YEAST:MONOMER3O-4029"/>
<dbReference type="BioGRID-ORCS" id="854872">
    <property type="hits" value="0 hits in 10 CRISPR screens"/>
</dbReference>
<dbReference type="PRO" id="PR:P38427"/>
<dbReference type="Proteomes" id="UP000002311">
    <property type="component" value="Chromosome XIII"/>
</dbReference>
<dbReference type="RNAct" id="P38427">
    <property type="molecule type" value="protein"/>
</dbReference>
<dbReference type="GO" id="GO:0005946">
    <property type="term" value="C:alpha,alpha-trehalose-phosphate synthase complex (UDP-forming)"/>
    <property type="evidence" value="ECO:0000353"/>
    <property type="project" value="SGD"/>
</dbReference>
<dbReference type="GO" id="GO:0005737">
    <property type="term" value="C:cytoplasm"/>
    <property type="evidence" value="ECO:0007005"/>
    <property type="project" value="SGD"/>
</dbReference>
<dbReference type="GO" id="GO:0003824">
    <property type="term" value="F:catalytic activity"/>
    <property type="evidence" value="ECO:0007669"/>
    <property type="project" value="InterPro"/>
</dbReference>
<dbReference type="GO" id="GO:0030234">
    <property type="term" value="F:enzyme regulator activity"/>
    <property type="evidence" value="ECO:0000314"/>
    <property type="project" value="SGD"/>
</dbReference>
<dbReference type="GO" id="GO:0005992">
    <property type="term" value="P:trehalose biosynthetic process"/>
    <property type="evidence" value="ECO:0000315"/>
    <property type="project" value="SGD"/>
</dbReference>
<dbReference type="CDD" id="cd03788">
    <property type="entry name" value="GT20_TPS"/>
    <property type="match status" value="1"/>
</dbReference>
<dbReference type="FunFam" id="3.40.50.2000:FF:000099">
    <property type="entry name" value="Alpha,alpha-trehalose phosphate synthase subunit, putative"/>
    <property type="match status" value="1"/>
</dbReference>
<dbReference type="FunFam" id="3.40.50.2000:FF:000036">
    <property type="entry name" value="Alpha,alpha-trehalose-phosphate synthase subunit Tps2"/>
    <property type="match status" value="1"/>
</dbReference>
<dbReference type="Gene3D" id="3.40.50.2000">
    <property type="entry name" value="Glycogen Phosphorylase B"/>
    <property type="match status" value="2"/>
</dbReference>
<dbReference type="InterPro" id="IPR001830">
    <property type="entry name" value="Glyco_trans_20"/>
</dbReference>
<dbReference type="InterPro" id="IPR036412">
    <property type="entry name" value="HAD-like_sf"/>
</dbReference>
<dbReference type="InterPro" id="IPR003337">
    <property type="entry name" value="Trehalose_PPase"/>
</dbReference>
<dbReference type="PANTHER" id="PTHR10788:SF15">
    <property type="entry name" value="TREHALOSE SYNTHASE COMPLEX REGULATORY SUBUNIT TPS3-RELATED"/>
    <property type="match status" value="1"/>
</dbReference>
<dbReference type="PANTHER" id="PTHR10788">
    <property type="entry name" value="TREHALOSE-6-PHOSPHATE SYNTHASE"/>
    <property type="match status" value="1"/>
</dbReference>
<dbReference type="Pfam" id="PF00982">
    <property type="entry name" value="Glyco_transf_20"/>
    <property type="match status" value="1"/>
</dbReference>
<dbReference type="Pfam" id="PF02358">
    <property type="entry name" value="Trehalose_PPase"/>
    <property type="match status" value="1"/>
</dbReference>
<dbReference type="SUPFAM" id="SSF56784">
    <property type="entry name" value="HAD-like"/>
    <property type="match status" value="1"/>
</dbReference>
<dbReference type="SUPFAM" id="SSF53756">
    <property type="entry name" value="UDP-Glycosyltransferase/glycogen phosphorylase"/>
    <property type="match status" value="1"/>
</dbReference>
<gene>
    <name type="primary">TSL1</name>
    <name type="ordered locus">YML100W</name>
</gene>
<proteinExistence type="evidence at protein level"/>
<organism>
    <name type="scientific">Saccharomyces cerevisiae (strain ATCC 204508 / S288c)</name>
    <name type="common">Baker's yeast</name>
    <dbReference type="NCBI Taxonomy" id="559292"/>
    <lineage>
        <taxon>Eukaryota</taxon>
        <taxon>Fungi</taxon>
        <taxon>Dikarya</taxon>
        <taxon>Ascomycota</taxon>
        <taxon>Saccharomycotina</taxon>
        <taxon>Saccharomycetes</taxon>
        <taxon>Saccharomycetales</taxon>
        <taxon>Saccharomycetaceae</taxon>
        <taxon>Saccharomyces</taxon>
    </lineage>
</organism>
<reference key="1">
    <citation type="journal article" date="1993" name="Eur. J. Biochem.">
        <title>Cloning of two related genes encoding the 56-kDa and 123-kDa subunits of trehalose synthase from the yeast Saccharomyces cerevisiae.</title>
        <authorList>
            <person name="Vuorio O.E."/>
            <person name="Kalkkinen N."/>
            <person name="Londesborough J."/>
        </authorList>
    </citation>
    <scope>NUCLEOTIDE SEQUENCE [GENOMIC DNA]</scope>
    <scope>PARTIAL PROTEIN SEQUENCE</scope>
    <source>
        <strain>ATCC 204508 / S288c</strain>
    </source>
</reference>
<reference key="2">
    <citation type="journal article" date="1997" name="Nature">
        <title>The nucleotide sequence of Saccharomyces cerevisiae chromosome XIII.</title>
        <authorList>
            <person name="Bowman S."/>
            <person name="Churcher C.M."/>
            <person name="Badcock K."/>
            <person name="Brown D."/>
            <person name="Chillingworth T."/>
            <person name="Connor R."/>
            <person name="Dedman K."/>
            <person name="Devlin K."/>
            <person name="Gentles S."/>
            <person name="Hamlin N."/>
            <person name="Hunt S."/>
            <person name="Jagels K."/>
            <person name="Lye G."/>
            <person name="Moule S."/>
            <person name="Odell C."/>
            <person name="Pearson D."/>
            <person name="Rajandream M.A."/>
            <person name="Rice P."/>
            <person name="Skelton J."/>
            <person name="Walsh S.V."/>
            <person name="Whitehead S."/>
            <person name="Barrell B.G."/>
        </authorList>
    </citation>
    <scope>NUCLEOTIDE SEQUENCE [LARGE SCALE GENOMIC DNA]</scope>
    <source>
        <strain>ATCC 204508 / S288c</strain>
    </source>
</reference>
<reference key="3">
    <citation type="journal article" date="2014" name="G3 (Bethesda)">
        <title>The reference genome sequence of Saccharomyces cerevisiae: Then and now.</title>
        <authorList>
            <person name="Engel S.R."/>
            <person name="Dietrich F.S."/>
            <person name="Fisk D.G."/>
            <person name="Binkley G."/>
            <person name="Balakrishnan R."/>
            <person name="Costanzo M.C."/>
            <person name="Dwight S.S."/>
            <person name="Hitz B.C."/>
            <person name="Karra K."/>
            <person name="Nash R.S."/>
            <person name="Weng S."/>
            <person name="Wong E.D."/>
            <person name="Lloyd P."/>
            <person name="Skrzypek M.S."/>
            <person name="Miyasato S.R."/>
            <person name="Simison M."/>
            <person name="Cherry J.M."/>
        </authorList>
    </citation>
    <scope>GENOME REANNOTATION</scope>
    <source>
        <strain>ATCC 204508 / S288c</strain>
    </source>
</reference>
<reference key="4">
    <citation type="journal article" date="1997" name="Mol. Microbiol.">
        <title>Structural analysis of the subunits of the trehalose-6-phosphate synthase/phosphatase complex in Saccharomyces cerevisiae and their function during heat shock.</title>
        <authorList>
            <person name="Reinders A."/>
            <person name="Buerckert N."/>
            <person name="Hohmann S."/>
            <person name="Thevelein J.M."/>
            <person name="Boller T."/>
            <person name="Wiemken A."/>
            <person name="De Virgilio C."/>
        </authorList>
    </citation>
    <scope>FUNCTION</scope>
    <scope>INTERACTION WITH TPS1 AND TPS2</scope>
</reference>
<reference key="5">
    <citation type="journal article" date="1998" name="J. Biol. Chem.">
        <title>Composition and functional analysis of the Saccharomyces cerevisiae trehalose synthase complex.</title>
        <authorList>
            <person name="Bell W."/>
            <person name="Sun W."/>
            <person name="Hohmann S."/>
            <person name="Wera S."/>
            <person name="Reinders A."/>
            <person name="De Virgilio C."/>
            <person name="Wiemken A."/>
            <person name="Thevelein J.M."/>
        </authorList>
    </citation>
    <scope>SUBUNIT</scope>
</reference>
<reference key="6">
    <citation type="journal article" date="2003" name="Nature">
        <title>Global analysis of protein localization in budding yeast.</title>
        <authorList>
            <person name="Huh W.-K."/>
            <person name="Falvo J.V."/>
            <person name="Gerke L.C."/>
            <person name="Carroll A.S."/>
            <person name="Howson R.W."/>
            <person name="Weissman J.S."/>
            <person name="O'Shea E.K."/>
        </authorList>
    </citation>
    <scope>SUBCELLULAR LOCATION [LARGE SCALE ANALYSIS]</scope>
</reference>
<reference key="7">
    <citation type="journal article" date="2003" name="Nature">
        <title>Global analysis of protein expression in yeast.</title>
        <authorList>
            <person name="Ghaemmaghami S."/>
            <person name="Huh W.-K."/>
            <person name="Bower K."/>
            <person name="Howson R.W."/>
            <person name="Belle A."/>
            <person name="Dephoure N."/>
            <person name="O'Shea E.K."/>
            <person name="Weissman J.S."/>
        </authorList>
    </citation>
    <scope>LEVEL OF PROTEIN EXPRESSION [LARGE SCALE ANALYSIS]</scope>
</reference>
<reference key="8">
    <citation type="journal article" date="2007" name="Proc. Natl. Acad. Sci. U.S.A.">
        <title>Analysis of phosphorylation sites on proteins from Saccharomyces cerevisiae by electron transfer dissociation (ETD) mass spectrometry.</title>
        <authorList>
            <person name="Chi A."/>
            <person name="Huttenhower C."/>
            <person name="Geer L.Y."/>
            <person name="Coon J.J."/>
            <person name="Syka J.E.P."/>
            <person name="Bai D.L."/>
            <person name="Shabanowitz J."/>
            <person name="Burke D.J."/>
            <person name="Troyanskaya O.G."/>
            <person name="Hunt D.F."/>
        </authorList>
    </citation>
    <scope>PHOSPHORYLATION [LARGE SCALE ANALYSIS] AT THR-251</scope>
    <scope>IDENTIFICATION BY MASS SPECTROMETRY [LARGE SCALE ANALYSIS]</scope>
</reference>
<reference key="9">
    <citation type="journal article" date="2008" name="Mol. Cell. Proteomics">
        <title>A multidimensional chromatography technology for in-depth phosphoproteome analysis.</title>
        <authorList>
            <person name="Albuquerque C.P."/>
            <person name="Smolka M.B."/>
            <person name="Payne S.H."/>
            <person name="Bafna V."/>
            <person name="Eng J."/>
            <person name="Zhou H."/>
        </authorList>
    </citation>
    <scope>PHOSPHORYLATION [LARGE SCALE ANALYSIS] AT SER-71; SER-77; SER-135; SER-147; SER-161; SER-303 AND THR-815</scope>
    <scope>IDENTIFICATION BY MASS SPECTROMETRY [LARGE SCALE ANALYSIS]</scope>
</reference>
<reference key="10">
    <citation type="journal article" date="2009" name="Science">
        <title>Global analysis of Cdk1 substrate phosphorylation sites provides insights into evolution.</title>
        <authorList>
            <person name="Holt L.J."/>
            <person name="Tuch B.B."/>
            <person name="Villen J."/>
            <person name="Johnson A.D."/>
            <person name="Gygi S.P."/>
            <person name="Morgan D.O."/>
        </authorList>
    </citation>
    <scope>PHOSPHORYLATION [LARGE SCALE ANALYSIS] AT SER-49; SER-53; SER-56; SER-71; SER-161 AND SER-229</scope>
    <scope>IDENTIFICATION BY MASS SPECTROMETRY [LARGE SCALE ANALYSIS]</scope>
</reference>
<comment type="function">
    <text evidence="4">Regulatory subunit of the trehalose synthase complex that catalyzes the production of trehalose from glucose-6-phosphate and UDP-glucose in a two step process. May stabilize the trehalose synthase complex, and confer sensitivity to physiological concentrations of phosphate and to fructose 6-phosphate.</text>
</comment>
<comment type="subunit">
    <text evidence="5">The trehalose synthase complex is composed of the two catalytic subunits TPS1 and TPS2, and at least one of the two regulatory subunits TPS3 or TSL1.</text>
</comment>
<comment type="interaction">
    <interactant intactId="EBI-19638">
        <id>P38427</id>
    </interactant>
    <interactant intactId="EBI-19430">
        <id>Q00764</id>
        <label>TPS1</label>
    </interactant>
    <organismsDiffer>false</organismsDiffer>
    <experiments>7</experiments>
</comment>
<comment type="interaction">
    <interactant intactId="EBI-19638">
        <id>P38427</id>
    </interactant>
    <interactant intactId="EBI-19440">
        <id>P31688</id>
        <label>TPS2</label>
    </interactant>
    <organismsDiffer>false</organismsDiffer>
    <experiments>4</experiments>
</comment>
<comment type="interaction">
    <interactant intactId="EBI-19638">
        <id>P38427</id>
    </interactant>
    <interactant intactId="EBI-19448">
        <id>P38426</id>
        <label>TPS3</label>
    </interactant>
    <organismsDiffer>false</organismsDiffer>
    <experiments>3</experiments>
</comment>
<comment type="subcellular location">
    <subcellularLocation>
        <location evidence="2">Cytoplasm</location>
    </subcellularLocation>
</comment>
<comment type="induction">
    <text>Repressed by glucose.</text>
</comment>
<comment type="domain">
    <text>C-terminal 700 AA are mainly in alpha-helices and beta-sheets.</text>
</comment>
<comment type="miscellaneous">
    <text evidence="3">Present with 1960 molecules/cell in log phase SD medium.</text>
</comment>
<comment type="similarity">
    <text evidence="6">In the C-terminal section; belongs to the glycosyltransferase 20 family.</text>
</comment>
<feature type="chain" id="PRO_0000122511" description="Trehalose synthase complex regulatory subunit TSL1">
    <location>
        <begin position="1"/>
        <end position="1098"/>
    </location>
</feature>
<feature type="repeat" description="1">
    <location>
        <begin position="144"/>
        <end position="150"/>
    </location>
</feature>
<feature type="repeat" description="2">
    <location>
        <begin position="158"/>
        <end position="164"/>
    </location>
</feature>
<feature type="region of interest" description="Disordered" evidence="1">
    <location>
        <begin position="59"/>
        <end position="86"/>
    </location>
</feature>
<feature type="region of interest" description="Disordered" evidence="1">
    <location>
        <begin position="129"/>
        <end position="168"/>
    </location>
</feature>
<feature type="region of interest" description="2 X 7 AA repeats of R-I-A-S-P-I-Q">
    <location>
        <begin position="144"/>
        <end position="164"/>
    </location>
</feature>
<feature type="region of interest" description="Disordered" evidence="1">
    <location>
        <begin position="192"/>
        <end position="244"/>
    </location>
</feature>
<feature type="region of interest" description="Disordered" evidence="1">
    <location>
        <begin position="274"/>
        <end position="297"/>
    </location>
</feature>
<feature type="region of interest" description="TPS complex domain">
    <location>
        <begin position="320"/>
        <end position="812"/>
    </location>
</feature>
<feature type="region of interest" description="Disordered" evidence="1">
    <location>
        <begin position="1000"/>
        <end position="1027"/>
    </location>
</feature>
<feature type="compositionally biased region" description="Polar residues" evidence="1">
    <location>
        <begin position="72"/>
        <end position="86"/>
    </location>
</feature>
<feature type="compositionally biased region" description="Polar residues" evidence="1">
    <location>
        <begin position="213"/>
        <end position="227"/>
    </location>
</feature>
<feature type="compositionally biased region" description="Low complexity" evidence="1">
    <location>
        <begin position="228"/>
        <end position="242"/>
    </location>
</feature>
<feature type="modified residue" description="Phosphoserine" evidence="9">
    <location>
        <position position="49"/>
    </location>
</feature>
<feature type="modified residue" description="Phosphoserine" evidence="9">
    <location>
        <position position="53"/>
    </location>
</feature>
<feature type="modified residue" description="Phosphoserine" evidence="9">
    <location>
        <position position="56"/>
    </location>
</feature>
<feature type="modified residue" description="Phosphoserine" evidence="8 9">
    <location>
        <position position="71"/>
    </location>
</feature>
<feature type="modified residue" description="Phosphoserine" evidence="8">
    <location>
        <position position="77"/>
    </location>
</feature>
<feature type="modified residue" description="Phosphoserine" evidence="8">
    <location>
        <position position="135"/>
    </location>
</feature>
<feature type="modified residue" description="Phosphoserine" evidence="8">
    <location>
        <position position="147"/>
    </location>
</feature>
<feature type="modified residue" description="Phosphoserine" evidence="8 9">
    <location>
        <position position="161"/>
    </location>
</feature>
<feature type="modified residue" description="Phosphoserine" evidence="9">
    <location>
        <position position="229"/>
    </location>
</feature>
<feature type="modified residue" description="Phosphothreonine" evidence="7">
    <location>
        <position position="251"/>
    </location>
</feature>
<feature type="modified residue" description="Phosphoserine" evidence="8">
    <location>
        <position position="303"/>
    </location>
</feature>
<feature type="modified residue" description="Phosphothreonine" evidence="8">
    <location>
        <position position="815"/>
    </location>
</feature>
<protein>
    <recommendedName>
        <fullName>Trehalose synthase complex regulatory subunit TSL1</fullName>
    </recommendedName>
    <alternativeName>
        <fullName>Alpha,alpha-trehalose-phosphate synthase [UDP-forming] 123 kDa subunit</fullName>
    </alternativeName>
</protein>
<sequence length="1098" mass="123018">MALIVASLFLPYQPQFELDTSLPENSQVDSSLVNIQAMANDQQQQRALSNNISQESLVAPAPEQGVPPAISRSATRSPSAFNRASSTTNTATLDDLVSSDIFMENLTANATTSHTPTSKTMLKPRKNGSVERFFSPSSNIPTDRIASPIQHEHDSGSRIASPIQQQQQDPTTNLLKNVNKSLLVHSLLNNTSQTSLEGPNNHIVTPKSRAGNRPTSAATSLVNRTKQGSASSGSSGSSAPPSIKRITPHLTASAAKQRPLLAKQPSNLKYSELADISSSETSSQHNESDPDDLTTAPDEEYVSDLEMDDAKQDYKVPKFGGYSNKSKLKKYALLRSSQELFSRLPWSIVPSIKGNGAMKNAINTAVLENIIPHRHVKWVGTVGIPTDEIPENILANISDSLKDKYDSYPVLTDDDTFKAAYKNYCKQILWPTLHYQIPDNPNSKAFEDHSWKFYRNLNQRFADAIVKIYKKGDTIWIHDYHLMLVPQMVRDVLPFAKIGFTLHVSFPSSEVFRCLAQREKILEGLTGADFVGFQTREYARHFLQTSNRLLMADVVHDEELKYNGRVVSVRFTPVGIDAFDLQSQLKDGSVMQWRQLIRERWQGKKLIVCRDQFDRIRGIHKKLLAYEKFLVENPEYVEKSTLIQICIGSSKDVELERQIMIVVDRINSLSTNISISQPVVFLHQDLDFSQYLALSSEADLFVVSSLREGMNLTCHEFIVCSEDKNAPLLLSEFTGSASLLNDGAIIINPWDTKNFSQAILKGLEMPFDKRRPQWKKLMKDIINNDSTNWIKTSLQDIHISWQFNQEGSKIFKLNTKTLMEDYQSSKKRMFVFNIAEPPSSRMISILNDMTSKGNIVYIMNSFPKPILENLYSRVQNIGLIAENGAYVSLNGVWYNIVDQVDWRNDVAKILEDKVERLPGSYYKINESMIKFHTENAEDQDRVASVIGDAITHINTVFDHRGIHAYVYKNVVSVQQVGLSLSAAQFLFRFYNSASDPLDTSSGQITNIQTPSQQNPSDQEQQPPASPTVSMNHIDFACVSGSSSPVLEPLFKLVNDEASEGQVKAGHAIVYGDATSTYAKEHVNGLNELFTIISRIIED</sequence>